<keyword id="KW-0963">Cytoplasm</keyword>
<keyword id="KW-0274">FAD</keyword>
<keyword id="KW-0285">Flavoprotein</keyword>
<keyword id="KW-0520">NAD</keyword>
<keyword id="KW-0819">tRNA processing</keyword>
<dbReference type="EMBL" id="CP001396">
    <property type="protein sequence ID" value="ACR63319.1"/>
    <property type="molecule type" value="Genomic_DNA"/>
</dbReference>
<dbReference type="RefSeq" id="WP_000499788.1">
    <property type="nucleotide sequence ID" value="NC_012759.1"/>
</dbReference>
<dbReference type="SMR" id="C4ZZ19"/>
<dbReference type="GeneID" id="75205459"/>
<dbReference type="KEGG" id="ebw:BWG_3432"/>
<dbReference type="HOGENOM" id="CLU_007831_2_2_6"/>
<dbReference type="GO" id="GO:0005829">
    <property type="term" value="C:cytosol"/>
    <property type="evidence" value="ECO:0007669"/>
    <property type="project" value="TreeGrafter"/>
</dbReference>
<dbReference type="GO" id="GO:0050660">
    <property type="term" value="F:flavin adenine dinucleotide binding"/>
    <property type="evidence" value="ECO:0007669"/>
    <property type="project" value="UniProtKB-UniRule"/>
</dbReference>
<dbReference type="GO" id="GO:0030488">
    <property type="term" value="P:tRNA methylation"/>
    <property type="evidence" value="ECO:0007669"/>
    <property type="project" value="TreeGrafter"/>
</dbReference>
<dbReference type="GO" id="GO:0002098">
    <property type="term" value="P:tRNA wobble uridine modification"/>
    <property type="evidence" value="ECO:0007669"/>
    <property type="project" value="InterPro"/>
</dbReference>
<dbReference type="FunFam" id="1.10.10.1800:FF:000001">
    <property type="entry name" value="tRNA uridine 5-carboxymethylaminomethyl modification enzyme MnmG"/>
    <property type="match status" value="1"/>
</dbReference>
<dbReference type="FunFam" id="1.10.150.570:FF:000001">
    <property type="entry name" value="tRNA uridine 5-carboxymethylaminomethyl modification enzyme MnmG"/>
    <property type="match status" value="1"/>
</dbReference>
<dbReference type="FunFam" id="3.50.50.60:FF:000002">
    <property type="entry name" value="tRNA uridine 5-carboxymethylaminomethyl modification enzyme MnmG"/>
    <property type="match status" value="1"/>
</dbReference>
<dbReference type="FunFam" id="3.50.50.60:FF:000010">
    <property type="entry name" value="tRNA uridine 5-carboxymethylaminomethyl modification enzyme MnmG"/>
    <property type="match status" value="1"/>
</dbReference>
<dbReference type="Gene3D" id="3.50.50.60">
    <property type="entry name" value="FAD/NAD(P)-binding domain"/>
    <property type="match status" value="2"/>
</dbReference>
<dbReference type="Gene3D" id="1.10.150.570">
    <property type="entry name" value="GidA associated domain, C-terminal subdomain"/>
    <property type="match status" value="1"/>
</dbReference>
<dbReference type="Gene3D" id="1.10.10.1800">
    <property type="entry name" value="tRNA uridine 5-carboxymethylaminomethyl modification enzyme MnmG/GidA"/>
    <property type="match status" value="1"/>
</dbReference>
<dbReference type="HAMAP" id="MF_00129">
    <property type="entry name" value="MnmG_GidA"/>
    <property type="match status" value="1"/>
</dbReference>
<dbReference type="InterPro" id="IPR036188">
    <property type="entry name" value="FAD/NAD-bd_sf"/>
</dbReference>
<dbReference type="InterPro" id="IPR049312">
    <property type="entry name" value="GIDA_C_N"/>
</dbReference>
<dbReference type="InterPro" id="IPR004416">
    <property type="entry name" value="MnmG"/>
</dbReference>
<dbReference type="InterPro" id="IPR002218">
    <property type="entry name" value="MnmG-rel"/>
</dbReference>
<dbReference type="InterPro" id="IPR020595">
    <property type="entry name" value="MnmG-rel_CS"/>
</dbReference>
<dbReference type="InterPro" id="IPR026904">
    <property type="entry name" value="MnmG_C"/>
</dbReference>
<dbReference type="InterPro" id="IPR047001">
    <property type="entry name" value="MnmG_C_subdom"/>
</dbReference>
<dbReference type="InterPro" id="IPR044920">
    <property type="entry name" value="MnmG_C_subdom_sf"/>
</dbReference>
<dbReference type="InterPro" id="IPR040131">
    <property type="entry name" value="MnmG_N"/>
</dbReference>
<dbReference type="NCBIfam" id="TIGR00136">
    <property type="entry name" value="mnmG_gidA"/>
    <property type="match status" value="1"/>
</dbReference>
<dbReference type="PANTHER" id="PTHR11806">
    <property type="entry name" value="GLUCOSE INHIBITED DIVISION PROTEIN A"/>
    <property type="match status" value="1"/>
</dbReference>
<dbReference type="PANTHER" id="PTHR11806:SF0">
    <property type="entry name" value="PROTEIN MTO1 HOMOLOG, MITOCHONDRIAL"/>
    <property type="match status" value="1"/>
</dbReference>
<dbReference type="Pfam" id="PF01134">
    <property type="entry name" value="GIDA"/>
    <property type="match status" value="1"/>
</dbReference>
<dbReference type="Pfam" id="PF21680">
    <property type="entry name" value="GIDA_C_1st"/>
    <property type="match status" value="1"/>
</dbReference>
<dbReference type="Pfam" id="PF13932">
    <property type="entry name" value="SAM_GIDA_C"/>
    <property type="match status" value="1"/>
</dbReference>
<dbReference type="SMART" id="SM01228">
    <property type="entry name" value="GIDA_assoc_3"/>
    <property type="match status" value="1"/>
</dbReference>
<dbReference type="SUPFAM" id="SSF51905">
    <property type="entry name" value="FAD/NAD(P)-binding domain"/>
    <property type="match status" value="1"/>
</dbReference>
<dbReference type="PROSITE" id="PS01280">
    <property type="entry name" value="GIDA_1"/>
    <property type="match status" value="1"/>
</dbReference>
<dbReference type="PROSITE" id="PS01281">
    <property type="entry name" value="GIDA_2"/>
    <property type="match status" value="1"/>
</dbReference>
<gene>
    <name evidence="1" type="primary">mnmG</name>
    <name evidence="1" type="synonym">gidA</name>
    <name type="ordered locus">BWG_3432</name>
</gene>
<sequence>MFYPDPFDVIIIGGGHAGTEAAMAAARMGQQTLLLTHNIDTLGQMSCNPAIGGIGKGHLVKEVDALGGLMAKAIDQAGIQFRILNASKGPAVRATRAQADRVLYRQAVRTALENQPNLMIFQQAVEDLIVENDRVVGAVTQMGLKFRAKAVVLTVGTFLDGKIHIGLDNYSGGRAGDPPSIPLSRRLRELPLRVGRLKTGTPPRIDARTIDFSVLAQQHGDNPMPVFSFMGNASQHPQQVPCYITHTNEKTHDVIRSNLDRSPMYAGVIEGVGPRYCPSIEDKVMRFADRNQHQIFLEPEGLTSNEIYPNGISTSLPFDVQMQIVRSMQGMENAKIVRPGYAIEYDFFDPRDLKPTLESKFIQGLFFAGQINGTTGYEEAAAQGLLAGLNAARLSADKEGWAPARSQAYLGVLVDDLCTLGTKEPYRMFTSRAEYRLMLREDNADLRLTEIGRELGLVDDERWARFNEKLENIERERQRLKSTWVTPSAEAAAEVNAHLTAPLSREASGEDLLRRPEMTYEKLTTLTPFAPALTDEQAAEQVEIQVKYEGYIARQQDEIEKQLRNENTLLPATLDYRQVSGLSNEVIAKLNDHKPASIGQASRISGVTPAAISILLVWLKKQGMLRRSA</sequence>
<proteinExistence type="inferred from homology"/>
<organism>
    <name type="scientific">Escherichia coli (strain K12 / MC4100 / BW2952)</name>
    <dbReference type="NCBI Taxonomy" id="595496"/>
    <lineage>
        <taxon>Bacteria</taxon>
        <taxon>Pseudomonadati</taxon>
        <taxon>Pseudomonadota</taxon>
        <taxon>Gammaproteobacteria</taxon>
        <taxon>Enterobacterales</taxon>
        <taxon>Enterobacteriaceae</taxon>
        <taxon>Escherichia</taxon>
    </lineage>
</organism>
<protein>
    <recommendedName>
        <fullName evidence="1">tRNA uridine 5-carboxymethylaminomethyl modification enzyme MnmG</fullName>
    </recommendedName>
    <alternativeName>
        <fullName evidence="1">Glucose-inhibited division protein A</fullName>
    </alternativeName>
</protein>
<feature type="chain" id="PRO_1000203161" description="tRNA uridine 5-carboxymethylaminomethyl modification enzyme MnmG">
    <location>
        <begin position="1"/>
        <end position="629"/>
    </location>
</feature>
<feature type="binding site" evidence="1">
    <location>
        <begin position="13"/>
        <end position="18"/>
    </location>
    <ligand>
        <name>FAD</name>
        <dbReference type="ChEBI" id="CHEBI:57692"/>
    </ligand>
</feature>
<feature type="binding site" evidence="1">
    <location>
        <position position="125"/>
    </location>
    <ligand>
        <name>FAD</name>
        <dbReference type="ChEBI" id="CHEBI:57692"/>
    </ligand>
</feature>
<feature type="binding site" evidence="1">
    <location>
        <position position="180"/>
    </location>
    <ligand>
        <name>FAD</name>
        <dbReference type="ChEBI" id="CHEBI:57692"/>
    </ligand>
</feature>
<feature type="binding site" evidence="1">
    <location>
        <begin position="273"/>
        <end position="287"/>
    </location>
    <ligand>
        <name>NAD(+)</name>
        <dbReference type="ChEBI" id="CHEBI:57540"/>
    </ligand>
</feature>
<feature type="binding site" evidence="1">
    <location>
        <position position="370"/>
    </location>
    <ligand>
        <name>FAD</name>
        <dbReference type="ChEBI" id="CHEBI:57692"/>
    </ligand>
</feature>
<comment type="function">
    <text evidence="1">NAD-binding protein involved in the addition of a carboxymethylaminomethyl (cmnm) group at the wobble position (U34) of certain tRNAs, forming tRNA-cmnm(5)s(2)U34.</text>
</comment>
<comment type="cofactor">
    <cofactor evidence="1">
        <name>FAD</name>
        <dbReference type="ChEBI" id="CHEBI:57692"/>
    </cofactor>
</comment>
<comment type="subunit">
    <text evidence="1">Homodimer. Heterotetramer of two MnmE and two MnmG subunits.</text>
</comment>
<comment type="subcellular location">
    <subcellularLocation>
        <location evidence="1">Cytoplasm</location>
    </subcellularLocation>
</comment>
<comment type="similarity">
    <text evidence="1">Belongs to the MnmG family.</text>
</comment>
<evidence type="ECO:0000255" key="1">
    <source>
        <dbReference type="HAMAP-Rule" id="MF_00129"/>
    </source>
</evidence>
<reference key="1">
    <citation type="journal article" date="2009" name="J. Bacteriol.">
        <title>Genomic sequencing reveals regulatory mutations and recombinational events in the widely used MC4100 lineage of Escherichia coli K-12.</title>
        <authorList>
            <person name="Ferenci T."/>
            <person name="Zhou Z."/>
            <person name="Betteridge T."/>
            <person name="Ren Y."/>
            <person name="Liu Y."/>
            <person name="Feng L."/>
            <person name="Reeves P.R."/>
            <person name="Wang L."/>
        </authorList>
    </citation>
    <scope>NUCLEOTIDE SEQUENCE [LARGE SCALE GENOMIC DNA]</scope>
    <source>
        <strain>K12 / MC4100 / BW2952</strain>
    </source>
</reference>
<name>MNMG_ECOBW</name>
<accession>C4ZZ19</accession>